<name>CYSD_ACIBS</name>
<reference key="1">
    <citation type="journal article" date="2008" name="PLoS ONE">
        <title>Comparative analysis of Acinetobacters: three genomes for three lifestyles.</title>
        <authorList>
            <person name="Vallenet D."/>
            <person name="Nordmann P."/>
            <person name="Barbe V."/>
            <person name="Poirel L."/>
            <person name="Mangenot S."/>
            <person name="Bataille E."/>
            <person name="Dossat C."/>
            <person name="Gas S."/>
            <person name="Kreimeyer A."/>
            <person name="Lenoble P."/>
            <person name="Oztas S."/>
            <person name="Poulain J."/>
            <person name="Segurens B."/>
            <person name="Robert C."/>
            <person name="Abergel C."/>
            <person name="Claverie J.-M."/>
            <person name="Raoult D."/>
            <person name="Medigue C."/>
            <person name="Weissenbach J."/>
            <person name="Cruveiller S."/>
        </authorList>
    </citation>
    <scope>NUCLEOTIDE SEQUENCE [LARGE SCALE GENOMIC DNA]</scope>
    <source>
        <strain>SDF</strain>
    </source>
</reference>
<keyword id="KW-0067">ATP-binding</keyword>
<keyword id="KW-0547">Nucleotide-binding</keyword>
<keyword id="KW-0548">Nucleotidyltransferase</keyword>
<keyword id="KW-0808">Transferase</keyword>
<organism>
    <name type="scientific">Acinetobacter baumannii (strain SDF)</name>
    <dbReference type="NCBI Taxonomy" id="509170"/>
    <lineage>
        <taxon>Bacteria</taxon>
        <taxon>Pseudomonadati</taxon>
        <taxon>Pseudomonadota</taxon>
        <taxon>Gammaproteobacteria</taxon>
        <taxon>Moraxellales</taxon>
        <taxon>Moraxellaceae</taxon>
        <taxon>Acinetobacter</taxon>
        <taxon>Acinetobacter calcoaceticus/baumannii complex</taxon>
    </lineage>
</organism>
<comment type="function">
    <text evidence="1">With CysN forms the ATP sulfurylase (ATPS) that catalyzes the adenylation of sulfate producing adenosine 5'-phosphosulfate (APS) and diphosphate, the first enzymatic step in sulfur assimilation pathway. APS synthesis involves the formation of a high-energy phosphoric-sulfuric acid anhydride bond driven by GTP hydrolysis by CysN coupled to ATP hydrolysis by CysD.</text>
</comment>
<comment type="catalytic activity">
    <reaction evidence="1">
        <text>sulfate + ATP + H(+) = adenosine 5'-phosphosulfate + diphosphate</text>
        <dbReference type="Rhea" id="RHEA:18133"/>
        <dbReference type="ChEBI" id="CHEBI:15378"/>
        <dbReference type="ChEBI" id="CHEBI:16189"/>
        <dbReference type="ChEBI" id="CHEBI:30616"/>
        <dbReference type="ChEBI" id="CHEBI:33019"/>
        <dbReference type="ChEBI" id="CHEBI:58243"/>
        <dbReference type="EC" id="2.7.7.4"/>
    </reaction>
</comment>
<comment type="pathway">
    <text evidence="1">Sulfur metabolism; hydrogen sulfide biosynthesis; sulfite from sulfate: step 1/3.</text>
</comment>
<comment type="subunit">
    <text evidence="1">Heterodimer composed of CysD, the smaller subunit, and CysN.</text>
</comment>
<comment type="similarity">
    <text evidence="1">Belongs to the PAPS reductase family. CysD subfamily.</text>
</comment>
<feature type="chain" id="PRO_1000092196" description="Sulfate adenylyltransferase subunit 2">
    <location>
        <begin position="1"/>
        <end position="304"/>
    </location>
</feature>
<proteinExistence type="inferred from homology"/>
<dbReference type="EC" id="2.7.7.4" evidence="1"/>
<dbReference type="EMBL" id="CU468230">
    <property type="protein sequence ID" value="CAP01705.1"/>
    <property type="molecule type" value="Genomic_DNA"/>
</dbReference>
<dbReference type="SMR" id="B0VSD7"/>
<dbReference type="KEGG" id="abm:ABSDF2394"/>
<dbReference type="HOGENOM" id="CLU_043026_0_0_6"/>
<dbReference type="UniPathway" id="UPA00140">
    <property type="reaction ID" value="UER00204"/>
</dbReference>
<dbReference type="Proteomes" id="UP000001741">
    <property type="component" value="Chromosome"/>
</dbReference>
<dbReference type="GO" id="GO:0005524">
    <property type="term" value="F:ATP binding"/>
    <property type="evidence" value="ECO:0007669"/>
    <property type="project" value="UniProtKB-KW"/>
</dbReference>
<dbReference type="GO" id="GO:0004781">
    <property type="term" value="F:sulfate adenylyltransferase (ATP) activity"/>
    <property type="evidence" value="ECO:0007669"/>
    <property type="project" value="UniProtKB-UniRule"/>
</dbReference>
<dbReference type="GO" id="GO:0070814">
    <property type="term" value="P:hydrogen sulfide biosynthetic process"/>
    <property type="evidence" value="ECO:0007669"/>
    <property type="project" value="UniProtKB-UniRule"/>
</dbReference>
<dbReference type="GO" id="GO:0000103">
    <property type="term" value="P:sulfate assimilation"/>
    <property type="evidence" value="ECO:0007669"/>
    <property type="project" value="UniProtKB-UniRule"/>
</dbReference>
<dbReference type="CDD" id="cd23946">
    <property type="entry name" value="Sulfate_adenylyltransferase_2"/>
    <property type="match status" value="1"/>
</dbReference>
<dbReference type="FunFam" id="3.40.50.620:FF:000002">
    <property type="entry name" value="Sulfate adenylyltransferase subunit 2"/>
    <property type="match status" value="1"/>
</dbReference>
<dbReference type="Gene3D" id="3.40.50.620">
    <property type="entry name" value="HUPs"/>
    <property type="match status" value="1"/>
</dbReference>
<dbReference type="HAMAP" id="MF_00064">
    <property type="entry name" value="Sulf_adenylyltr_sub2"/>
    <property type="match status" value="1"/>
</dbReference>
<dbReference type="InterPro" id="IPR002500">
    <property type="entry name" value="PAPS_reduct_dom"/>
</dbReference>
<dbReference type="InterPro" id="IPR014729">
    <property type="entry name" value="Rossmann-like_a/b/a_fold"/>
</dbReference>
<dbReference type="InterPro" id="IPR011784">
    <property type="entry name" value="SO4_adenylTrfase_ssu"/>
</dbReference>
<dbReference type="InterPro" id="IPR050128">
    <property type="entry name" value="Sulfate_adenylyltrnsfr_sub2"/>
</dbReference>
<dbReference type="NCBIfam" id="TIGR02039">
    <property type="entry name" value="CysD"/>
    <property type="match status" value="1"/>
</dbReference>
<dbReference type="NCBIfam" id="NF003587">
    <property type="entry name" value="PRK05253.1"/>
    <property type="match status" value="1"/>
</dbReference>
<dbReference type="NCBIfam" id="NF009214">
    <property type="entry name" value="PRK12563.1"/>
    <property type="match status" value="1"/>
</dbReference>
<dbReference type="PANTHER" id="PTHR43196">
    <property type="entry name" value="SULFATE ADENYLYLTRANSFERASE SUBUNIT 2"/>
    <property type="match status" value="1"/>
</dbReference>
<dbReference type="PANTHER" id="PTHR43196:SF1">
    <property type="entry name" value="SULFATE ADENYLYLTRANSFERASE SUBUNIT 2"/>
    <property type="match status" value="1"/>
</dbReference>
<dbReference type="Pfam" id="PF01507">
    <property type="entry name" value="PAPS_reduct"/>
    <property type="match status" value="1"/>
</dbReference>
<dbReference type="PIRSF" id="PIRSF002936">
    <property type="entry name" value="CysDAde_trans"/>
    <property type="match status" value="1"/>
</dbReference>
<dbReference type="SUPFAM" id="SSF52402">
    <property type="entry name" value="Adenine nucleotide alpha hydrolases-like"/>
    <property type="match status" value="1"/>
</dbReference>
<protein>
    <recommendedName>
        <fullName evidence="1">Sulfate adenylyltransferase subunit 2</fullName>
        <ecNumber evidence="1">2.7.7.4</ecNumber>
    </recommendedName>
    <alternativeName>
        <fullName evidence="1">ATP-sulfurylase small subunit</fullName>
    </alternativeName>
    <alternativeName>
        <fullName evidence="1">Sulfate adenylate transferase</fullName>
        <shortName evidence="1">SAT</shortName>
    </alternativeName>
</protein>
<accession>B0VSD7</accession>
<sequence>MFMTESRLTHLKQLEAESIHIIREVAAEFENPVMLYSIGKDSAVMLHLALKAFYPAKLPFPLLHVDTGWKFKDMIAFRDNMAKTHGFDLIVHQNKEGREAGINPFDHGSSKYTDIMKTQALKQALDKYQFDAAFGGARRDEEKSRAKERVYSFRDSKHRWDPKNQRPELWNLYNGKVNKGESIRVFPLSNWTELDIWQYIYLENIQIVPLYFSAVRPVVERSGTLIMVDDERMRLKEGEVPQMKSVRFRTLGCYPLTGAVESEADTLPEIIQEMLLATSSERQGRMIDHDEAGSMEKKKQEGYF</sequence>
<gene>
    <name evidence="1" type="primary">cysD</name>
    <name type="ordered locus">ABSDF2394</name>
</gene>
<evidence type="ECO:0000255" key="1">
    <source>
        <dbReference type="HAMAP-Rule" id="MF_00064"/>
    </source>
</evidence>